<protein>
    <recommendedName>
        <fullName>Complement component C1q receptor</fullName>
    </recommendedName>
    <alternativeName>
        <fullName>C1q/MBL/SPA receptor</fullName>
        <shortName>C1qR</shortName>
        <shortName>C1qR(p)</shortName>
        <shortName>C1qRp</shortName>
    </alternativeName>
    <alternativeName>
        <fullName>CDw93</fullName>
    </alternativeName>
    <alternativeName>
        <fullName>Complement component 1 q subcomponent receptor 1</fullName>
    </alternativeName>
    <alternativeName>
        <fullName>Matrix-remodeling-associated protein 4</fullName>
    </alternativeName>
    <cdAntigenName>CD93</cdAntigenName>
</protein>
<gene>
    <name type="primary">CD93</name>
    <name type="synonym">C1QR1</name>
    <name type="synonym">MXRA4</name>
</gene>
<proteinExistence type="evidence at protein level"/>
<organism>
    <name type="scientific">Homo sapiens</name>
    <name type="common">Human</name>
    <dbReference type="NCBI Taxonomy" id="9606"/>
    <lineage>
        <taxon>Eukaryota</taxon>
        <taxon>Metazoa</taxon>
        <taxon>Chordata</taxon>
        <taxon>Craniata</taxon>
        <taxon>Vertebrata</taxon>
        <taxon>Euteleostomi</taxon>
        <taxon>Mammalia</taxon>
        <taxon>Eutheria</taxon>
        <taxon>Euarchontoglires</taxon>
        <taxon>Primates</taxon>
        <taxon>Haplorrhini</taxon>
        <taxon>Catarrhini</taxon>
        <taxon>Hominidae</taxon>
        <taxon>Homo</taxon>
    </lineage>
</organism>
<dbReference type="EMBL" id="U94333">
    <property type="protein sequence ID" value="AAB53110.1"/>
    <property type="molecule type" value="mRNA"/>
</dbReference>
<dbReference type="EMBL" id="AL118508">
    <property type="status" value="NOT_ANNOTATED_CDS"/>
    <property type="molecule type" value="Genomic_DNA"/>
</dbReference>
<dbReference type="EMBL" id="BC028075">
    <property type="protein sequence ID" value="AAH28075.1"/>
    <property type="molecule type" value="mRNA"/>
</dbReference>
<dbReference type="CCDS" id="CCDS13149.1"/>
<dbReference type="RefSeq" id="NP_036204.2">
    <property type="nucleotide sequence ID" value="NM_012072.4"/>
</dbReference>
<dbReference type="PDB" id="8A59">
    <property type="method" value="X-ray"/>
    <property type="resolution" value="1.92 A"/>
    <property type="chains" value="A=22-257"/>
</dbReference>
<dbReference type="PDB" id="8IVD">
    <property type="method" value="X-ray"/>
    <property type="resolution" value="3.24 A"/>
    <property type="chains" value="A/B/C/D=25-347"/>
</dbReference>
<dbReference type="PDBsum" id="8A59"/>
<dbReference type="PDBsum" id="8IVD"/>
<dbReference type="SMR" id="Q9NPY3"/>
<dbReference type="BioGRID" id="116580">
    <property type="interactions" value="30"/>
</dbReference>
<dbReference type="FunCoup" id="Q9NPY3">
    <property type="interactions" value="122"/>
</dbReference>
<dbReference type="IntAct" id="Q9NPY3">
    <property type="interactions" value="24"/>
</dbReference>
<dbReference type="STRING" id="9606.ENSP00000246006"/>
<dbReference type="UniLectin" id="Q9NPY3"/>
<dbReference type="GlyCosmos" id="Q9NPY3">
    <property type="glycosylation" value="3 sites, 1 glycan"/>
</dbReference>
<dbReference type="GlyGen" id="Q9NPY3">
    <property type="glycosylation" value="4 sites, 1 O-linked glycan (2 sites)"/>
</dbReference>
<dbReference type="iPTMnet" id="Q9NPY3"/>
<dbReference type="PhosphoSitePlus" id="Q9NPY3"/>
<dbReference type="BioMuta" id="CD93"/>
<dbReference type="DMDM" id="21759074"/>
<dbReference type="MassIVE" id="Q9NPY3"/>
<dbReference type="PaxDb" id="9606-ENSP00000246006"/>
<dbReference type="PeptideAtlas" id="Q9NPY3"/>
<dbReference type="ProteomicsDB" id="82049"/>
<dbReference type="TopDownProteomics" id="Q9NPY3"/>
<dbReference type="ABCD" id="Q9NPY3">
    <property type="antibodies" value="1 sequenced antibody"/>
</dbReference>
<dbReference type="Antibodypedia" id="2408">
    <property type="antibodies" value="595 antibodies from 36 providers"/>
</dbReference>
<dbReference type="DNASU" id="22918"/>
<dbReference type="Ensembl" id="ENST00000246006.5">
    <property type="protein sequence ID" value="ENSP00000246006.4"/>
    <property type="gene ID" value="ENSG00000125810.11"/>
</dbReference>
<dbReference type="Ensembl" id="ENST00000850633.1">
    <property type="protein sequence ID" value="ENSP00000520912.1"/>
    <property type="gene ID" value="ENSG00000125810.11"/>
</dbReference>
<dbReference type="Ensembl" id="ENST00000850634.1">
    <property type="protein sequence ID" value="ENSP00000520913.1"/>
    <property type="gene ID" value="ENSG00000125810.11"/>
</dbReference>
<dbReference type="Ensembl" id="ENST00000850635.1">
    <property type="protein sequence ID" value="ENSP00000520914.1"/>
    <property type="gene ID" value="ENSG00000125810.11"/>
</dbReference>
<dbReference type="GeneID" id="22918"/>
<dbReference type="KEGG" id="hsa:22918"/>
<dbReference type="MANE-Select" id="ENST00000246006.5">
    <property type="protein sequence ID" value="ENSP00000246006.4"/>
    <property type="RefSeq nucleotide sequence ID" value="NM_012072.4"/>
    <property type="RefSeq protein sequence ID" value="NP_036204.2"/>
</dbReference>
<dbReference type="UCSC" id="uc002wsv.4">
    <property type="organism name" value="human"/>
</dbReference>
<dbReference type="AGR" id="HGNC:15855"/>
<dbReference type="CTD" id="22918"/>
<dbReference type="DisGeNET" id="22918"/>
<dbReference type="GeneCards" id="CD93"/>
<dbReference type="HGNC" id="HGNC:15855">
    <property type="gene designation" value="CD93"/>
</dbReference>
<dbReference type="HPA" id="ENSG00000125810">
    <property type="expression patterns" value="Tissue enhanced (placenta)"/>
</dbReference>
<dbReference type="MalaCards" id="CD93"/>
<dbReference type="MIM" id="120577">
    <property type="type" value="gene"/>
</dbReference>
<dbReference type="neXtProt" id="NX_Q9NPY3"/>
<dbReference type="OpenTargets" id="ENSG00000125810"/>
<dbReference type="PharmGKB" id="PA25627"/>
<dbReference type="VEuPathDB" id="HostDB:ENSG00000125810"/>
<dbReference type="eggNOG" id="ENOG502QUVB">
    <property type="taxonomic scope" value="Eukaryota"/>
</dbReference>
<dbReference type="GeneTree" id="ENSGT00940000156996"/>
<dbReference type="HOGENOM" id="CLU_027075_1_0_1"/>
<dbReference type="InParanoid" id="Q9NPY3"/>
<dbReference type="OMA" id="YTNWHKE"/>
<dbReference type="OrthoDB" id="10045365at2759"/>
<dbReference type="PAN-GO" id="Q9NPY3">
    <property type="GO annotations" value="0 GO annotations based on evolutionary models"/>
</dbReference>
<dbReference type="PhylomeDB" id="Q9NPY3"/>
<dbReference type="TreeFam" id="TF330714"/>
<dbReference type="PathwayCommons" id="Q9NPY3"/>
<dbReference type="Reactome" id="R-HSA-6798695">
    <property type="pathway name" value="Neutrophil degranulation"/>
</dbReference>
<dbReference type="SignaLink" id="Q9NPY3"/>
<dbReference type="BioGRID-ORCS" id="22918">
    <property type="hits" value="19 hits in 1147 CRISPR screens"/>
</dbReference>
<dbReference type="GeneWiki" id="CD93"/>
<dbReference type="GenomeRNAi" id="22918"/>
<dbReference type="Pharos" id="Q9NPY3">
    <property type="development level" value="Tbio"/>
</dbReference>
<dbReference type="PRO" id="PR:Q9NPY3"/>
<dbReference type="Proteomes" id="UP000005640">
    <property type="component" value="Chromosome 20"/>
</dbReference>
<dbReference type="RNAct" id="Q9NPY3">
    <property type="molecule type" value="protein"/>
</dbReference>
<dbReference type="Bgee" id="ENSG00000125810">
    <property type="expression patterns" value="Expressed in visceral pleura and 194 other cell types or tissues"/>
</dbReference>
<dbReference type="GO" id="GO:0009986">
    <property type="term" value="C:cell surface"/>
    <property type="evidence" value="ECO:0007669"/>
    <property type="project" value="Ensembl"/>
</dbReference>
<dbReference type="GO" id="GO:0101003">
    <property type="term" value="C:ficolin-1-rich granule membrane"/>
    <property type="evidence" value="ECO:0000304"/>
    <property type="project" value="Reactome"/>
</dbReference>
<dbReference type="GO" id="GO:0005886">
    <property type="term" value="C:plasma membrane"/>
    <property type="evidence" value="ECO:0000314"/>
    <property type="project" value="LIFEdb"/>
</dbReference>
<dbReference type="GO" id="GO:0030667">
    <property type="term" value="C:secretory granule membrane"/>
    <property type="evidence" value="ECO:0000304"/>
    <property type="project" value="Reactome"/>
</dbReference>
<dbReference type="GO" id="GO:0035579">
    <property type="term" value="C:specific granule membrane"/>
    <property type="evidence" value="ECO:0000304"/>
    <property type="project" value="Reactome"/>
</dbReference>
<dbReference type="GO" id="GO:0070821">
    <property type="term" value="C:tertiary granule membrane"/>
    <property type="evidence" value="ECO:0000304"/>
    <property type="project" value="Reactome"/>
</dbReference>
<dbReference type="GO" id="GO:0005509">
    <property type="term" value="F:calcium ion binding"/>
    <property type="evidence" value="ECO:0007669"/>
    <property type="project" value="InterPro"/>
</dbReference>
<dbReference type="GO" id="GO:0030246">
    <property type="term" value="F:carbohydrate binding"/>
    <property type="evidence" value="ECO:0007669"/>
    <property type="project" value="UniProtKB-KW"/>
</dbReference>
<dbReference type="GO" id="GO:0001849">
    <property type="term" value="F:complement component C1q complex binding"/>
    <property type="evidence" value="ECO:0000314"/>
    <property type="project" value="UniProtKB"/>
</dbReference>
<dbReference type="GO" id="GO:0038023">
    <property type="term" value="F:signaling receptor activity"/>
    <property type="evidence" value="ECO:0000314"/>
    <property type="project" value="UniProt"/>
</dbReference>
<dbReference type="GO" id="GO:0001525">
    <property type="term" value="P:angiogenesis"/>
    <property type="evidence" value="ECO:0000314"/>
    <property type="project" value="UniProt"/>
</dbReference>
<dbReference type="GO" id="GO:0098609">
    <property type="term" value="P:cell-cell adhesion"/>
    <property type="evidence" value="ECO:0000314"/>
    <property type="project" value="UniProtKB"/>
</dbReference>
<dbReference type="GO" id="GO:0042116">
    <property type="term" value="P:macrophage activation"/>
    <property type="evidence" value="ECO:0000303"/>
    <property type="project" value="UniProtKB"/>
</dbReference>
<dbReference type="GO" id="GO:0006909">
    <property type="term" value="P:phagocytosis"/>
    <property type="evidence" value="ECO:0000303"/>
    <property type="project" value="UniProtKB"/>
</dbReference>
<dbReference type="CDD" id="cd03600">
    <property type="entry name" value="CLECT_thrombomodulin_like"/>
    <property type="match status" value="1"/>
</dbReference>
<dbReference type="CDD" id="cd00054">
    <property type="entry name" value="EGF_CA"/>
    <property type="match status" value="3"/>
</dbReference>
<dbReference type="FunFam" id="2.10.25.10:FF:000606">
    <property type="entry name" value="Complement component C1q receptor"/>
    <property type="match status" value="1"/>
</dbReference>
<dbReference type="FunFam" id="2.10.25.10:FF:000655">
    <property type="entry name" value="Complement component C1q receptor"/>
    <property type="match status" value="1"/>
</dbReference>
<dbReference type="FunFam" id="2.10.25.10:FF:000809">
    <property type="entry name" value="Complement component C1q receptor"/>
    <property type="match status" value="1"/>
</dbReference>
<dbReference type="FunFam" id="3.10.100.10:FF:000116">
    <property type="entry name" value="Complement component C1q receptor"/>
    <property type="match status" value="1"/>
</dbReference>
<dbReference type="FunFam" id="2.10.25.10:FF:000038">
    <property type="entry name" value="Fibrillin 2"/>
    <property type="match status" value="1"/>
</dbReference>
<dbReference type="Gene3D" id="2.10.25.10">
    <property type="entry name" value="Laminin"/>
    <property type="match status" value="5"/>
</dbReference>
<dbReference type="Gene3D" id="3.10.100.10">
    <property type="entry name" value="Mannose-Binding Protein A, subunit A"/>
    <property type="match status" value="1"/>
</dbReference>
<dbReference type="InterPro" id="IPR001304">
    <property type="entry name" value="C-type_lectin-like"/>
</dbReference>
<dbReference type="InterPro" id="IPR016186">
    <property type="entry name" value="C-type_lectin-like/link_sf"/>
</dbReference>
<dbReference type="InterPro" id="IPR051505">
    <property type="entry name" value="C-type_lectin_domain"/>
</dbReference>
<dbReference type="InterPro" id="IPR026823">
    <property type="entry name" value="cEGF"/>
</dbReference>
<dbReference type="InterPro" id="IPR016187">
    <property type="entry name" value="CTDL_fold"/>
</dbReference>
<dbReference type="InterPro" id="IPR001881">
    <property type="entry name" value="EGF-like_Ca-bd_dom"/>
</dbReference>
<dbReference type="InterPro" id="IPR000742">
    <property type="entry name" value="EGF-like_dom"/>
</dbReference>
<dbReference type="InterPro" id="IPR000152">
    <property type="entry name" value="EGF-type_Asp/Asn_hydroxyl_site"/>
</dbReference>
<dbReference type="InterPro" id="IPR018097">
    <property type="entry name" value="EGF_Ca-bd_CS"/>
</dbReference>
<dbReference type="InterPro" id="IPR009030">
    <property type="entry name" value="Growth_fac_rcpt_cys_sf"/>
</dbReference>
<dbReference type="InterPro" id="IPR049883">
    <property type="entry name" value="NOTCH1_EGF-like"/>
</dbReference>
<dbReference type="PANTHER" id="PTHR14789:SF8">
    <property type="entry name" value="C-TYPE LECTIN DOMAIN FAMILY 14 MEMBER A PRECURSOR-RELATED"/>
    <property type="match status" value="1"/>
</dbReference>
<dbReference type="PANTHER" id="PTHR14789">
    <property type="entry name" value="CHONDROLECTIN VARIANT CHODLFDELTAE"/>
    <property type="match status" value="1"/>
</dbReference>
<dbReference type="Pfam" id="PF12662">
    <property type="entry name" value="cEGF"/>
    <property type="match status" value="1"/>
</dbReference>
<dbReference type="Pfam" id="PF07645">
    <property type="entry name" value="EGF_CA"/>
    <property type="match status" value="2"/>
</dbReference>
<dbReference type="Pfam" id="PF00059">
    <property type="entry name" value="Lectin_C"/>
    <property type="match status" value="1"/>
</dbReference>
<dbReference type="SMART" id="SM00034">
    <property type="entry name" value="CLECT"/>
    <property type="match status" value="1"/>
</dbReference>
<dbReference type="SMART" id="SM00181">
    <property type="entry name" value="EGF"/>
    <property type="match status" value="5"/>
</dbReference>
<dbReference type="SMART" id="SM00179">
    <property type="entry name" value="EGF_CA"/>
    <property type="match status" value="5"/>
</dbReference>
<dbReference type="SUPFAM" id="SSF56436">
    <property type="entry name" value="C-type lectin-like"/>
    <property type="match status" value="1"/>
</dbReference>
<dbReference type="SUPFAM" id="SSF57196">
    <property type="entry name" value="EGF/Laminin"/>
    <property type="match status" value="2"/>
</dbReference>
<dbReference type="SUPFAM" id="SSF57184">
    <property type="entry name" value="Growth factor receptor domain"/>
    <property type="match status" value="1"/>
</dbReference>
<dbReference type="PROSITE" id="PS00010">
    <property type="entry name" value="ASX_HYDROXYL"/>
    <property type="match status" value="3"/>
</dbReference>
<dbReference type="PROSITE" id="PS50041">
    <property type="entry name" value="C_TYPE_LECTIN_2"/>
    <property type="match status" value="1"/>
</dbReference>
<dbReference type="PROSITE" id="PS01186">
    <property type="entry name" value="EGF_2"/>
    <property type="match status" value="3"/>
</dbReference>
<dbReference type="PROSITE" id="PS50026">
    <property type="entry name" value="EGF_3"/>
    <property type="match status" value="3"/>
</dbReference>
<dbReference type="PROSITE" id="PS01187">
    <property type="entry name" value="EGF_CA"/>
    <property type="match status" value="3"/>
</dbReference>
<keyword id="KW-0002">3D-structure</keyword>
<keyword id="KW-0130">Cell adhesion</keyword>
<keyword id="KW-1003">Cell membrane</keyword>
<keyword id="KW-0903">Direct protein sequencing</keyword>
<keyword id="KW-1015">Disulfide bond</keyword>
<keyword id="KW-0245">EGF-like domain</keyword>
<keyword id="KW-0325">Glycoprotein</keyword>
<keyword id="KW-0945">Host-virus interaction</keyword>
<keyword id="KW-0430">Lectin</keyword>
<keyword id="KW-0472">Membrane</keyword>
<keyword id="KW-0597">Phosphoprotein</keyword>
<keyword id="KW-1267">Proteomics identification</keyword>
<keyword id="KW-0675">Receptor</keyword>
<keyword id="KW-1185">Reference proteome</keyword>
<keyword id="KW-0677">Repeat</keyword>
<keyword id="KW-0732">Signal</keyword>
<keyword id="KW-0812">Transmembrane</keyword>
<keyword id="KW-1133">Transmembrane helix</keyword>
<evidence type="ECO:0000250" key="1"/>
<evidence type="ECO:0000250" key="2">
    <source>
        <dbReference type="UniProtKB" id="O89103"/>
    </source>
</evidence>
<evidence type="ECO:0000250" key="3">
    <source>
        <dbReference type="UniProtKB" id="Q9ET61"/>
    </source>
</evidence>
<evidence type="ECO:0000255" key="4"/>
<evidence type="ECO:0000255" key="5">
    <source>
        <dbReference type="PROSITE-ProRule" id="PRU00040"/>
    </source>
</evidence>
<evidence type="ECO:0000255" key="6">
    <source>
        <dbReference type="PROSITE-ProRule" id="PRU00076"/>
    </source>
</evidence>
<evidence type="ECO:0000256" key="7">
    <source>
        <dbReference type="SAM" id="MobiDB-lite"/>
    </source>
</evidence>
<evidence type="ECO:0000269" key="8">
    <source>
    </source>
</evidence>
<evidence type="ECO:0000269" key="9">
    <source>
    </source>
</evidence>
<evidence type="ECO:0000269" key="10">
    <source>
    </source>
</evidence>
<evidence type="ECO:0000269" key="11">
    <source>
    </source>
</evidence>
<evidence type="ECO:0000269" key="12">
    <source>
    </source>
</evidence>
<evidence type="ECO:0000269" key="13">
    <source>
    </source>
</evidence>
<evidence type="ECO:0000269" key="14">
    <source>
    </source>
</evidence>
<evidence type="ECO:0000269" key="15">
    <source>
    </source>
</evidence>
<evidence type="ECO:0000269" key="16">
    <source>
    </source>
</evidence>
<evidence type="ECO:0000269" key="17">
    <source>
    </source>
</evidence>
<evidence type="ECO:0000269" key="18">
    <source>
    </source>
</evidence>
<evidence type="ECO:0000269" key="19">
    <source>
    </source>
</evidence>
<evidence type="ECO:0000305" key="20"/>
<evidence type="ECO:0007744" key="21">
    <source>
        <dbReference type="PDB" id="8A59"/>
    </source>
</evidence>
<evidence type="ECO:0007744" key="22">
    <source>
        <dbReference type="PDB" id="8IVD"/>
    </source>
</evidence>
<evidence type="ECO:0007829" key="23">
    <source>
        <dbReference type="PDB" id="8A59"/>
    </source>
</evidence>
<evidence type="ECO:0007829" key="24">
    <source>
        <dbReference type="PDB" id="8IVD"/>
    </source>
</evidence>
<name>C1QR1_HUMAN</name>
<feature type="signal peptide">
    <location>
        <begin position="1"/>
        <end position="21"/>
    </location>
</feature>
<feature type="chain" id="PRO_0000017367" description="Complement component C1q receptor">
    <location>
        <begin position="22"/>
        <end position="652"/>
    </location>
</feature>
<feature type="topological domain" description="Extracellular" evidence="4">
    <location>
        <begin position="24"/>
        <end position="580"/>
    </location>
</feature>
<feature type="transmembrane region" description="Helical" evidence="4">
    <location>
        <begin position="581"/>
        <end position="601"/>
    </location>
</feature>
<feature type="topological domain" description="Cytoplasmic" evidence="4">
    <location>
        <begin position="602"/>
        <end position="652"/>
    </location>
</feature>
<feature type="domain" description="C-type lectin" evidence="5">
    <location>
        <begin position="32"/>
        <end position="174"/>
    </location>
</feature>
<feature type="domain" description="EGF-like 1" evidence="6">
    <location>
        <begin position="260"/>
        <end position="301"/>
    </location>
</feature>
<feature type="domain" description="EGF-like 2" evidence="6">
    <location>
        <begin position="302"/>
        <end position="344"/>
    </location>
</feature>
<feature type="domain" description="EGF-like 3; calcium-binding" evidence="6">
    <location>
        <begin position="345"/>
        <end position="384"/>
    </location>
</feature>
<feature type="domain" description="EGF-like 4; calcium-binding" evidence="6">
    <location>
        <begin position="385"/>
        <end position="426"/>
    </location>
</feature>
<feature type="domain" description="EGF-like 5; calcium-binding" evidence="6">
    <location>
        <begin position="427"/>
        <end position="468"/>
    </location>
</feature>
<feature type="region of interest" description="Disordered" evidence="7">
    <location>
        <begin position="472"/>
        <end position="546"/>
    </location>
</feature>
<feature type="region of interest" description="Disordered" evidence="7">
    <location>
        <begin position="553"/>
        <end position="572"/>
    </location>
</feature>
<feature type="region of interest" description="Disordered" evidence="7">
    <location>
        <begin position="611"/>
        <end position="652"/>
    </location>
</feature>
<feature type="compositionally biased region" description="Polar residues" evidence="7">
    <location>
        <begin position="512"/>
        <end position="526"/>
    </location>
</feature>
<feature type="compositionally biased region" description="Basic and acidic residues" evidence="7">
    <location>
        <begin position="612"/>
        <end position="621"/>
    </location>
</feature>
<feature type="compositionally biased region" description="Polar residues" evidence="7">
    <location>
        <begin position="640"/>
        <end position="652"/>
    </location>
</feature>
<feature type="modified residue" description="Phosphoserine" evidence="3">
    <location>
        <position position="627"/>
    </location>
</feature>
<feature type="modified residue" description="Phosphotyrosine" evidence="13">
    <location>
        <position position="628"/>
    </location>
</feature>
<feature type="modified residue" description="Phosphotyrosine" evidence="13">
    <location>
        <position position="644"/>
    </location>
</feature>
<feature type="glycosylation site" description="N-linked (GlcNAc...) asparagine" evidence="4">
    <location>
        <position position="325"/>
    </location>
</feature>
<feature type="disulfide bond" evidence="5">
    <location>
        <begin position="141"/>
        <end position="165"/>
    </location>
</feature>
<feature type="disulfide bond" evidence="1">
    <location>
        <begin position="264"/>
        <end position="275"/>
    </location>
</feature>
<feature type="disulfide bond" evidence="1">
    <location>
        <begin position="271"/>
        <end position="285"/>
    </location>
</feature>
<feature type="disulfide bond" evidence="1">
    <location>
        <begin position="287"/>
        <end position="300"/>
    </location>
</feature>
<feature type="disulfide bond" evidence="5">
    <location>
        <begin position="306"/>
        <end position="317"/>
    </location>
</feature>
<feature type="disulfide bond" evidence="5">
    <location>
        <begin position="311"/>
        <end position="328"/>
    </location>
</feature>
<feature type="disulfide bond" evidence="1">
    <location>
        <begin position="330"/>
        <end position="343"/>
    </location>
</feature>
<feature type="disulfide bond" evidence="5">
    <location>
        <begin position="349"/>
        <end position="358"/>
    </location>
</feature>
<feature type="disulfide bond" evidence="5">
    <location>
        <begin position="354"/>
        <end position="367"/>
    </location>
</feature>
<feature type="disulfide bond" evidence="1">
    <location>
        <begin position="369"/>
        <end position="383"/>
    </location>
</feature>
<feature type="disulfide bond" evidence="5">
    <location>
        <begin position="389"/>
        <end position="400"/>
    </location>
</feature>
<feature type="disulfide bond" evidence="5">
    <location>
        <begin position="396"/>
        <end position="409"/>
    </location>
</feature>
<feature type="disulfide bond" evidence="5">
    <location>
        <begin position="411"/>
        <end position="425"/>
    </location>
</feature>
<feature type="disulfide bond" evidence="1">
    <location>
        <begin position="431"/>
        <end position="443"/>
    </location>
</feature>
<feature type="disulfide bond" evidence="1">
    <location>
        <begin position="439"/>
        <end position="452"/>
    </location>
</feature>
<feature type="disulfide bond" evidence="1">
    <location>
        <begin position="454"/>
        <end position="467"/>
    </location>
</feature>
<feature type="sequence variant" id="VAR_036400" description="In a colorectal cancer sample; somatic mutation; dbSNP:rs138932459." evidence="11">
    <original>A</original>
    <variation>V</variation>
    <location>
        <position position="220"/>
    </location>
</feature>
<feature type="sequence variant" id="VAR_013573" evidence="10">
    <original>V</original>
    <variation>A</variation>
    <location>
        <position position="318"/>
    </location>
</feature>
<feature type="sequence variant" id="VAR_050102" description="In dbSNP:rs3746731." evidence="18">
    <original>P</original>
    <variation>S</variation>
    <location>
        <position position="541"/>
    </location>
</feature>
<feature type="mutagenesis site" description="Loss of interaction with MMRN2." evidence="14">
    <original>C</original>
    <variation>S</variation>
    <location>
        <position position="104"/>
    </location>
</feature>
<feature type="mutagenesis site" description="Loss of interaction with MMRN2." evidence="14">
    <original>C</original>
    <variation>S</variation>
    <location>
        <position position="136"/>
    </location>
</feature>
<feature type="mutagenesis site" description="Loss of interaction with IGFBP7." evidence="16">
    <original>F</original>
    <variation>A</variation>
    <location>
        <position position="276"/>
    </location>
</feature>
<feature type="mutagenesis site" description="Loss of interaction with IGFBP7." evidence="16">
    <original>D</original>
    <variation>A</variation>
    <location>
        <position position="295"/>
    </location>
</feature>
<feature type="sequence conflict" description="In Ref. 1; AA sequence." evidence="20" ref="1">
    <original>T</original>
    <variation>V</variation>
    <location>
        <position position="22"/>
    </location>
</feature>
<feature type="sequence conflict" description="In Ref. 1; AA sequence." evidence="20" ref="1">
    <original>C</original>
    <variation>T</variation>
    <location>
        <position position="36"/>
    </location>
</feature>
<feature type="sequence conflict" description="In Ref. 1; AA sequence." evidence="20" ref="1">
    <original>TA</original>
    <variation>RI</variation>
    <location>
        <begin position="38"/>
        <end position="39"/>
    </location>
</feature>
<feature type="sequence conflict" description="In Ref. 1; AAB53110." evidence="20" ref="1">
    <original>S</original>
    <variation>N</variation>
    <location>
        <position position="155"/>
    </location>
</feature>
<feature type="sequence conflict" description="In Ref. 1; AA sequence." evidence="20" ref="1">
    <original>G</original>
    <variation>A</variation>
    <location>
        <position position="186"/>
    </location>
</feature>
<feature type="sequence conflict" description="In Ref. 1; AA sequence." evidence="20" ref="1">
    <original>S</original>
    <variation>A</variation>
    <location>
        <position position="492"/>
    </location>
</feature>
<feature type="sequence conflict" description="In Ref. 1; AA sequence." evidence="20" ref="1">
    <original>R</original>
    <variation>Q</variation>
    <location>
        <position position="496"/>
    </location>
</feature>
<feature type="sequence conflict" description="In Ref. 1; AA sequence." evidence="20" ref="1">
    <original>R</original>
    <variation>G</variation>
    <location>
        <position position="504"/>
    </location>
</feature>
<feature type="strand" evidence="23">
    <location>
        <begin position="29"/>
        <end position="32"/>
    </location>
</feature>
<feature type="strand" evidence="23">
    <location>
        <begin position="35"/>
        <end position="41"/>
    </location>
</feature>
<feature type="helix" evidence="23">
    <location>
        <begin position="46"/>
        <end position="55"/>
    </location>
</feature>
<feature type="helix" evidence="23">
    <location>
        <begin position="66"/>
        <end position="82"/>
    </location>
</feature>
<feature type="strand" evidence="23">
    <location>
        <begin position="89"/>
        <end position="99"/>
    </location>
</feature>
<feature type="strand" evidence="24">
    <location>
        <begin position="101"/>
        <end position="103"/>
    </location>
</feature>
<feature type="turn" evidence="23">
    <location>
        <begin position="110"/>
        <end position="113"/>
    </location>
</feature>
<feature type="strand" evidence="23">
    <location>
        <begin position="136"/>
        <end position="138"/>
    </location>
</feature>
<feature type="strand" evidence="23">
    <location>
        <begin position="140"/>
        <end position="147"/>
    </location>
</feature>
<feature type="strand" evidence="24">
    <location>
        <begin position="154"/>
        <end position="156"/>
    </location>
</feature>
<feature type="strand" evidence="23">
    <location>
        <begin position="159"/>
        <end position="163"/>
    </location>
</feature>
<feature type="strand" evidence="23">
    <location>
        <begin position="175"/>
        <end position="183"/>
    </location>
</feature>
<feature type="strand" evidence="23">
    <location>
        <begin position="198"/>
        <end position="202"/>
    </location>
</feature>
<feature type="strand" evidence="24">
    <location>
        <begin position="204"/>
        <end position="206"/>
    </location>
</feature>
<feature type="strand" evidence="24">
    <location>
        <begin position="208"/>
        <end position="210"/>
    </location>
</feature>
<feature type="strand" evidence="23">
    <location>
        <begin position="213"/>
        <end position="216"/>
    </location>
</feature>
<feature type="strand" evidence="23">
    <location>
        <begin position="220"/>
        <end position="224"/>
    </location>
</feature>
<feature type="strand" evidence="23">
    <location>
        <begin position="237"/>
        <end position="239"/>
    </location>
</feature>
<feature type="strand" evidence="24">
    <location>
        <begin position="241"/>
        <end position="244"/>
    </location>
</feature>
<feature type="strand" evidence="24">
    <location>
        <begin position="247"/>
        <end position="249"/>
    </location>
</feature>
<feature type="turn" evidence="24">
    <location>
        <begin position="260"/>
        <end position="266"/>
    </location>
</feature>
<feature type="helix" evidence="24">
    <location>
        <begin position="267"/>
        <end position="270"/>
    </location>
</feature>
<feature type="strand" evidence="24">
    <location>
        <begin position="272"/>
        <end position="277"/>
    </location>
</feature>
<feature type="strand" evidence="24">
    <location>
        <begin position="279"/>
        <end position="281"/>
    </location>
</feature>
<feature type="strand" evidence="24">
    <location>
        <begin position="283"/>
        <end position="286"/>
    </location>
</feature>
<feature type="strand" evidence="24">
    <location>
        <begin position="291"/>
        <end position="293"/>
    </location>
</feature>
<feature type="strand" evidence="24">
    <location>
        <begin position="300"/>
        <end position="302"/>
    </location>
</feature>
<comment type="function">
    <text evidence="2 12 13 14 15 16 17">Cell surface receptor that plays a role in various physiological processes including inflammation, phagocytosis, and cell adhesion. Plays a role in phagocytosis and enhances the uptake of apoptotic cells and immune complexes by acting as a receptor for defense collagens including surfactant protein A/SFTPA1, C1q, and mannose-binding lectin (MBL2) (PubMed:7977768). Plays a role in the regulation of endothelial cell function and adhesion by activating angiogenesis (PubMed:24809468). Mechanistically, exerts its angiogenic function by associating with beta-dystroglycan, leading to SRC-dependent phosphorylation and subsequent recruitment of CBL. In turn, CBL provides a docking site for downstream signaling components, such as CRKL to enhance cell migration (PubMed:26848865). Participates in angiogenesis also by acting as a receptor for the ECM pan-endothelial glycoprotein multimerin-2/MMRN2 and IGFBP7 ligands (PubMed:28671670, PubMed:36265539, PubMed:38218180). Both ligands play a non-redundant role in CD93-mediated endothelial cell function (PubMed:38218180). Acts as a key regulator of endothelial barrier function through modulating VEGFR2 function (By similarity).</text>
</comment>
<comment type="subunit">
    <text evidence="2 13 15 16 17 19">Homodimer (PubMed:36265539). Interacts with C1QBP; the association may represent a cell surface C1q receptor (PubMed:9233640). Interacts with surfactant protein A/SFTPA1 (PubMed:7977768). Interacts with multimerin-2/MMRN2 (PubMed:28671670, PubMed:36265539). Interacts with DAG1; this interaction plays an important role in endothelial cell migration (PubMed:26848865). Interacts with CBL (PubMed:26848865). Interacts with IGFBP7 (PubMed:38218180). Interacts with VEGFR2 (By similarity).</text>
</comment>
<comment type="subunit">
    <text evidence="9">(Microbial infection) Interacts with hepatitis virus C/HCV core protein.</text>
</comment>
<comment type="subcellular location">
    <subcellularLocation>
        <location evidence="12 13">Cell membrane</location>
        <topology>Single-pass type I membrane protein</topology>
    </subcellularLocation>
</comment>
<comment type="tissue specificity">
    <text>Highly expressed in endothelial cells, platelets, cells of myeloid origin, such as monocytes and neutrophils. Not expressed in cells of lymphoid origin.</text>
</comment>
<comment type="PTM">
    <text evidence="8">N- and O-glycosylated.</text>
</comment>
<comment type="PTM">
    <text evidence="13">Phosphorylated on Tyr-628 and Tyr-644 by SRC; these phosphorylations promote endothelial cell adhesion and migration.</text>
</comment>
<comment type="caution">
    <text evidence="20">Has been sometimes referred to as a collectin receptor.</text>
</comment>
<comment type="caution">
    <text evidence="20">PubMed:11994479 reported that C1q is not a ligand for C1QR1.</text>
</comment>
<sequence>MATSMGLLLLLLLLLTQPGAGTGADTEAVVCVGTACYTAHSGKLSAAEAQNHCNQNGGNLATVKSKEEAQHVQRVLAQLLRREAALTARMSKFWIGLQREKGKCLDPSLPLKGFSWVGGGEDTPYSNWHKELRNSCISKRCVSLLLDLSQPLLPSRLPKWSEGPCGSPGSPGSNIEGFVCKFSFKGMCRPLALGGPGQVTYTTPFQTTSSSLEAVPFASAANVACGEGDKDETQSHYFLCKEKAPDVFDWGSSGPLCVSPKYGCNFNNGGCHQDCFEGGDGSFLCGCRPGFRLLDDLVTCASRNPCSSSPCRGGATCVLGPHGKNYTCRCPQGYQLDSSQLDCVDVDECQDSPCAQECVNTPGGFRCECWVGYEPGGPGEGACQDVDECALGRSPCAQGCTNTDGSFHCSCEEGYVLAGEDGTQCQDVDECVGPGGPLCDSLCFNTQGSFHCGCLPGWVLAPNGVSCTMGPVSLGPPSGPPDEEDKGEKEGSTVPRAATASPTRGPEGTPKATPTTSRPSLSSDAPITSAPLKMLAPSGSPGVWREPSIHHATAASGPQEPAGGDSSVATQNNDGTDGQKLLLFYILGTVVAILLLLALALGLLVYRKRRAKREEKKEKKPQNAADSYSWVPERAESRAMENQYSPTPGTDC</sequence>
<accession>Q9NPY3</accession>
<accession>O00274</accession>
<reference key="1">
    <citation type="journal article" date="1997" name="Immunity">
        <title>cDNA cloning and primary structure analysis of C1qR(P), the human C1q/MBL/SPA receptor that mediates enhanced phagocytosis in vitro.</title>
        <authorList>
            <person name="Nepomuceno R.R."/>
            <person name="Henschen-Edman A.H."/>
            <person name="Burgess W.H."/>
            <person name="Tenner A.J."/>
        </authorList>
    </citation>
    <scope>NUCLEOTIDE SEQUENCE [MRNA]</scope>
    <scope>PARTIAL PROTEIN SEQUENCE</scope>
    <scope>VARIANT SER-541</scope>
</reference>
<reference key="2">
    <citation type="journal article" date="2002" name="J. Leukoc. Biol.">
        <title>Identification of human CD93 as the phagocytic C1q receptor (C1qRp) by expression cloning.</title>
        <authorList>
            <person name="Steinberger P."/>
            <person name="Szekeres A."/>
            <person name="Wille S."/>
            <person name="Stockl J."/>
            <person name="Selenko N."/>
            <person name="Prager E."/>
            <person name="Staffler G."/>
            <person name="Madic O."/>
            <person name="Stockinger H."/>
            <person name="Knapp W."/>
        </authorList>
    </citation>
    <scope>NUCLEOTIDE SEQUENCE [MRNA]</scope>
    <scope>VARIANT ALA-318</scope>
</reference>
<reference key="3">
    <citation type="journal article" date="2001" name="Nature">
        <title>The DNA sequence and comparative analysis of human chromosome 20.</title>
        <authorList>
            <person name="Deloukas P."/>
            <person name="Matthews L.H."/>
            <person name="Ashurst J.L."/>
            <person name="Burton J."/>
            <person name="Gilbert J.G.R."/>
            <person name="Jones M."/>
            <person name="Stavrides G."/>
            <person name="Almeida J.P."/>
            <person name="Babbage A.K."/>
            <person name="Bagguley C.L."/>
            <person name="Bailey J."/>
            <person name="Barlow K.F."/>
            <person name="Bates K.N."/>
            <person name="Beard L.M."/>
            <person name="Beare D.M."/>
            <person name="Beasley O.P."/>
            <person name="Bird C.P."/>
            <person name="Blakey S.E."/>
            <person name="Bridgeman A.M."/>
            <person name="Brown A.J."/>
            <person name="Buck D."/>
            <person name="Burrill W.D."/>
            <person name="Butler A.P."/>
            <person name="Carder C."/>
            <person name="Carter N.P."/>
            <person name="Chapman J.C."/>
            <person name="Clamp M."/>
            <person name="Clark G."/>
            <person name="Clark L.N."/>
            <person name="Clark S.Y."/>
            <person name="Clee C.M."/>
            <person name="Clegg S."/>
            <person name="Cobley V.E."/>
            <person name="Collier R.E."/>
            <person name="Connor R.E."/>
            <person name="Corby N.R."/>
            <person name="Coulson A."/>
            <person name="Coville G.J."/>
            <person name="Deadman R."/>
            <person name="Dhami P.D."/>
            <person name="Dunn M."/>
            <person name="Ellington A.G."/>
            <person name="Frankland J.A."/>
            <person name="Fraser A."/>
            <person name="French L."/>
            <person name="Garner P."/>
            <person name="Grafham D.V."/>
            <person name="Griffiths C."/>
            <person name="Griffiths M.N.D."/>
            <person name="Gwilliam R."/>
            <person name="Hall R.E."/>
            <person name="Hammond S."/>
            <person name="Harley J.L."/>
            <person name="Heath P.D."/>
            <person name="Ho S."/>
            <person name="Holden J.L."/>
            <person name="Howden P.J."/>
            <person name="Huckle E."/>
            <person name="Hunt A.R."/>
            <person name="Hunt S.E."/>
            <person name="Jekosch K."/>
            <person name="Johnson C.M."/>
            <person name="Johnson D."/>
            <person name="Kay M.P."/>
            <person name="Kimberley A.M."/>
            <person name="King A."/>
            <person name="Knights A."/>
            <person name="Laird G.K."/>
            <person name="Lawlor S."/>
            <person name="Lehvaeslaiho M.H."/>
            <person name="Leversha M.A."/>
            <person name="Lloyd C."/>
            <person name="Lloyd D.M."/>
            <person name="Lovell J.D."/>
            <person name="Marsh V.L."/>
            <person name="Martin S.L."/>
            <person name="McConnachie L.J."/>
            <person name="McLay K."/>
            <person name="McMurray A.A."/>
            <person name="Milne S.A."/>
            <person name="Mistry D."/>
            <person name="Moore M.J.F."/>
            <person name="Mullikin J.C."/>
            <person name="Nickerson T."/>
            <person name="Oliver K."/>
            <person name="Parker A."/>
            <person name="Patel R."/>
            <person name="Pearce T.A.V."/>
            <person name="Peck A.I."/>
            <person name="Phillimore B.J.C.T."/>
            <person name="Prathalingam S.R."/>
            <person name="Plumb R.W."/>
            <person name="Ramsay H."/>
            <person name="Rice C.M."/>
            <person name="Ross M.T."/>
            <person name="Scott C.E."/>
            <person name="Sehra H.K."/>
            <person name="Shownkeen R."/>
            <person name="Sims S."/>
            <person name="Skuce C.D."/>
            <person name="Smith M.L."/>
            <person name="Soderlund C."/>
            <person name="Steward C.A."/>
            <person name="Sulston J.E."/>
            <person name="Swann R.M."/>
            <person name="Sycamore N."/>
            <person name="Taylor R."/>
            <person name="Tee L."/>
            <person name="Thomas D.W."/>
            <person name="Thorpe A."/>
            <person name="Tracey A."/>
            <person name="Tromans A.C."/>
            <person name="Vaudin M."/>
            <person name="Wall M."/>
            <person name="Wallis J.M."/>
            <person name="Whitehead S.L."/>
            <person name="Whittaker P."/>
            <person name="Willey D.L."/>
            <person name="Williams L."/>
            <person name="Williams S.A."/>
            <person name="Wilming L."/>
            <person name="Wray P.W."/>
            <person name="Hubbard T."/>
            <person name="Durbin R.M."/>
            <person name="Bentley D.R."/>
            <person name="Beck S."/>
            <person name="Rogers J."/>
        </authorList>
    </citation>
    <scope>NUCLEOTIDE SEQUENCE [LARGE SCALE GENOMIC DNA]</scope>
</reference>
<reference key="4">
    <citation type="journal article" date="2004" name="Genome Res.">
        <title>The status, quality, and expansion of the NIH full-length cDNA project: the Mammalian Gene Collection (MGC).</title>
        <authorList>
            <consortium name="The MGC Project Team"/>
        </authorList>
    </citation>
    <scope>NUCLEOTIDE SEQUENCE [LARGE SCALE MRNA]</scope>
    <source>
        <tissue>Leukocyte</tissue>
    </source>
</reference>
<reference key="5">
    <citation type="journal article" date="1994" name="Am. J. Physiol.">
        <title>Binding of surfactant protein A to C1q receptors mediates phagocytosis of Staphylococcus aureus by monocytes.</title>
        <authorList>
            <person name="Geertsma M.F."/>
            <person name="Nibbering P.H."/>
            <person name="Haagsman H.P."/>
            <person name="Daha M.R."/>
            <person name="van Furth R."/>
        </authorList>
    </citation>
    <scope>FUNCTION</scope>
    <scope>INTERACTION WITH SFTPA1</scope>
</reference>
<reference key="6">
    <citation type="journal article" date="1997" name="J. Immunol.">
        <title>Evidence that the two C1q binding membrane proteins, gC1q-R and cC1q-R, associate to form a complex.</title>
        <authorList>
            <person name="Ghebrehiwet B."/>
            <person name="Lu P.D."/>
            <person name="Zhang W."/>
            <person name="Keilbaugh S.A."/>
            <person name="Leigh L.E."/>
            <person name="Eggleton P."/>
            <person name="Reid K.B."/>
            <person name="Peerschke E.I."/>
        </authorList>
    </citation>
    <scope>INTERACTION WITH C1QBP</scope>
</reference>
<reference key="7">
    <citation type="journal article" date="2002" name="J. Immunol.">
        <title>Human C1qRp is identical with CD93 and the mNI-11 antigen but does not bind C1q.</title>
        <authorList>
            <person name="McGreal E.P."/>
            <person name="Ikewaki N."/>
            <person name="Akatsu H."/>
            <person name="Morgan B.P."/>
            <person name="Gasque P."/>
        </authorList>
    </citation>
    <scope>CHARACTERIZATION</scope>
</reference>
<reference key="8">
    <citation type="journal article" date="1999" name="J. Immunol.">
        <title>C1qRP is a heavily O-glycosylated cell surface protein involved in the regulation of phagocytic activity.</title>
        <authorList>
            <person name="Nepomuceno R.R."/>
            <person name="Ruiz S."/>
            <person name="Park M."/>
            <person name="Tenner A.J."/>
        </authorList>
    </citation>
    <scope>GLYCOSYLATION</scope>
</reference>
<reference key="9">
    <citation type="journal article" date="2000" name="J. Clin. Invest.">
        <title>Interaction between complement receptor gC1qR and hepatitis C virus core protein inhibits T-lymphocyte proliferation.</title>
        <authorList>
            <person name="Kittlesen D.J."/>
            <person name="Chianese-Bullock K.A."/>
            <person name="Yao Z.Q."/>
            <person name="Braciale T.J."/>
            <person name="Hahn Y.S."/>
        </authorList>
    </citation>
    <scope>INTERACTION WITH HCV CORE PROTEIN (MICROBIAL INFECTION)</scope>
</reference>
<reference key="10">
    <citation type="journal article" date="2014" name="Oncotarget">
        <title>The characterization of a novel monoclonal antibody against CD93 unveils a new antiangiogenic target.</title>
        <authorList>
            <person name="Orlandini M."/>
            <person name="Galvagni F."/>
            <person name="Bardelli M."/>
            <person name="Rocchigiani M."/>
            <person name="Lentucci C."/>
            <person name="Anselmi F."/>
            <person name="Zippo A."/>
            <person name="Bini L."/>
            <person name="Oliviero S."/>
        </authorList>
    </citation>
    <scope>FUNCTION IN ANGIOGENESIS</scope>
    <scope>SUBCELLULAR LOCATION</scope>
</reference>
<reference key="11">
    <citation type="journal article" date="2015" name="Proteomics">
        <title>N-terminome analysis of the human mitochondrial proteome.</title>
        <authorList>
            <person name="Vaca Jacome A.S."/>
            <person name="Rabilloud T."/>
            <person name="Schaeffer-Reiss C."/>
            <person name="Rompais M."/>
            <person name="Ayoub D."/>
            <person name="Lane L."/>
            <person name="Bairoch A."/>
            <person name="Van Dorsselaer A."/>
            <person name="Carapito C."/>
        </authorList>
    </citation>
    <scope>IDENTIFICATION BY MASS SPECTROMETRY [LARGE SCALE ANALYSIS]</scope>
</reference>
<reference key="12">
    <citation type="journal article" date="2016" name="Oncotarget">
        <title>CD93 and dystroglycan cooperation in human endothelial cell adhesion and migration adhesion and migration.</title>
        <authorList>
            <person name="Galvagni F."/>
            <person name="Nardi F."/>
            <person name="Maida M."/>
            <person name="Bernardini G."/>
            <person name="Vannuccini S."/>
            <person name="Petraglia F."/>
            <person name="Santucci A."/>
            <person name="Orlandini M."/>
        </authorList>
    </citation>
    <scope>FUNCTION</scope>
    <scope>SUBCELLULAR LOCATION</scope>
    <scope>PHOSPHORYLATION AT TYR-628 AND TYR-644</scope>
    <scope>INTERACTION WITH DAG1 AND CBL</scope>
</reference>
<reference key="13">
    <citation type="journal article" date="2017" name="Oncogene">
        <title>Multimerin-2 is a ligand for group 14 family C-type lectins CLEC14A, CD93 and CD248 spanning the endothelial pericyte interface.</title>
        <authorList>
            <person name="Khan K.A."/>
            <person name="Naylor A.J."/>
            <person name="Khan A."/>
            <person name="Noy P.J."/>
            <person name="Mambretti M."/>
            <person name="Lodhia P."/>
            <person name="Athwal J."/>
            <person name="Korzystka A."/>
            <person name="Buckley C.D."/>
            <person name="Willcox B.E."/>
            <person name="Mohammed F."/>
            <person name="Bicknell R."/>
        </authorList>
    </citation>
    <scope>FUNCTION</scope>
    <scope>INTERACTION WITH MMRN2</scope>
    <scope>MUTAGENESIS OF CYS-104 AND CYS-136</scope>
</reference>
<reference evidence="21" key="14">
    <citation type="journal article" date="2023" name="Int. J. Biol. Macromol.">
        <title>Dimerization of the C-type lectin-like receptor CD93 promotes its binding to Multimerin-2 in endothelial cells.</title>
        <authorList>
            <person name="Barbera S."/>
            <person name="Raucci L."/>
            <person name="Tassone G."/>
            <person name="Tinti L."/>
            <person name="Prischi F."/>
            <person name="Santucci A."/>
            <person name="Mongiat M."/>
            <person name="Tosi G.M."/>
            <person name="Galvagni F."/>
            <person name="Dimberg A."/>
            <person name="Pozzi C."/>
            <person name="Orlandini M."/>
        </authorList>
    </citation>
    <scope>X-RAY CRYSTALLOGRAPHY (1.92 ANGSTROMS) OF 22-257</scope>
    <scope>SUBUNIT</scope>
    <scope>INTERACTION WITH MMRN2</scope>
</reference>
<reference evidence="22" key="15">
    <citation type="journal article" date="2024" name="Structure">
        <title>Structural insight into CD93 recognition by IGFBP7.</title>
        <authorList>
            <person name="Xu Y."/>
            <person name="Sun Y."/>
            <person name="Zhu Y."/>
            <person name="Song G."/>
        </authorList>
    </citation>
    <scope>X-RAY CRYSTALLOGRAPHY (3.24 ANGSTROMS) OF 25-347</scope>
    <scope>INTERACTION WITH IGFBP7</scope>
    <scope>FUNCTION</scope>
    <scope>MUTAGENESIS OF PHE-276 AND ASP-295</scope>
</reference>
<reference key="16">
    <citation type="journal article" date="2006" name="Science">
        <title>The consensus coding sequences of human breast and colorectal cancers.</title>
        <authorList>
            <person name="Sjoeblom T."/>
            <person name="Jones S."/>
            <person name="Wood L.D."/>
            <person name="Parsons D.W."/>
            <person name="Lin J."/>
            <person name="Barber T.D."/>
            <person name="Mandelker D."/>
            <person name="Leary R.J."/>
            <person name="Ptak J."/>
            <person name="Silliman N."/>
            <person name="Szabo S."/>
            <person name="Buckhaults P."/>
            <person name="Farrell C."/>
            <person name="Meeh P."/>
            <person name="Markowitz S.D."/>
            <person name="Willis J."/>
            <person name="Dawson D."/>
            <person name="Willson J.K.V."/>
            <person name="Gazdar A.F."/>
            <person name="Hartigan J."/>
            <person name="Wu L."/>
            <person name="Liu C."/>
            <person name="Parmigiani G."/>
            <person name="Park B.H."/>
            <person name="Bachman K.E."/>
            <person name="Papadopoulos N."/>
            <person name="Vogelstein B."/>
            <person name="Kinzler K.W."/>
            <person name="Velculescu V.E."/>
        </authorList>
    </citation>
    <scope>VARIANT [LARGE SCALE ANALYSIS] VAL-220</scope>
</reference>